<dbReference type="EMBL" id="CP000922">
    <property type="protein sequence ID" value="ACJ33738.1"/>
    <property type="molecule type" value="Genomic_DNA"/>
</dbReference>
<dbReference type="RefSeq" id="WP_006318598.1">
    <property type="nucleotide sequence ID" value="NC_011567.1"/>
</dbReference>
<dbReference type="STRING" id="491915.Aflv_1370"/>
<dbReference type="GeneID" id="7037624"/>
<dbReference type="KEGG" id="afl:Aflv_1370"/>
<dbReference type="eggNOG" id="ENOG5033HHC">
    <property type="taxonomic scope" value="Bacteria"/>
</dbReference>
<dbReference type="HOGENOM" id="CLU_216714_0_0_9"/>
<dbReference type="Proteomes" id="UP000000742">
    <property type="component" value="Chromosome"/>
</dbReference>
<dbReference type="GO" id="GO:0042601">
    <property type="term" value="C:endospore-forming forespore"/>
    <property type="evidence" value="ECO:0007669"/>
    <property type="project" value="InterPro"/>
</dbReference>
<dbReference type="GO" id="GO:0030436">
    <property type="term" value="P:asexual sporulation"/>
    <property type="evidence" value="ECO:0007669"/>
    <property type="project" value="UniProtKB-UniRule"/>
</dbReference>
<dbReference type="GO" id="GO:0030435">
    <property type="term" value="P:sporulation resulting in formation of a cellular spore"/>
    <property type="evidence" value="ECO:0007669"/>
    <property type="project" value="UniProtKB-KW"/>
</dbReference>
<dbReference type="HAMAP" id="MF_01505">
    <property type="entry name" value="SspN"/>
    <property type="match status" value="1"/>
</dbReference>
<dbReference type="InterPro" id="IPR012612">
    <property type="entry name" value="SASP_SspN"/>
</dbReference>
<dbReference type="NCBIfam" id="NF006904">
    <property type="entry name" value="PRK09398.1"/>
    <property type="match status" value="1"/>
</dbReference>
<dbReference type="Pfam" id="PF08177">
    <property type="entry name" value="SspN"/>
    <property type="match status" value="1"/>
</dbReference>
<organism>
    <name type="scientific">Anoxybacillus flavithermus (strain DSM 21510 / WK1)</name>
    <dbReference type="NCBI Taxonomy" id="491915"/>
    <lineage>
        <taxon>Bacteria</taxon>
        <taxon>Bacillati</taxon>
        <taxon>Bacillota</taxon>
        <taxon>Bacilli</taxon>
        <taxon>Bacillales</taxon>
        <taxon>Anoxybacillaceae</taxon>
        <taxon>Anoxybacillus</taxon>
    </lineage>
</organism>
<keyword id="KW-0749">Sporulation</keyword>
<feature type="chain" id="PRO_1000196549" description="Small, acid-soluble spore protein N">
    <location>
        <begin position="1"/>
        <end position="47"/>
    </location>
</feature>
<feature type="region of interest" description="Disordered" evidence="2">
    <location>
        <begin position="1"/>
        <end position="47"/>
    </location>
</feature>
<feature type="compositionally biased region" description="Polar residues" evidence="2">
    <location>
        <begin position="1"/>
        <end position="11"/>
    </location>
</feature>
<feature type="compositionally biased region" description="Polar residues" evidence="2">
    <location>
        <begin position="29"/>
        <end position="47"/>
    </location>
</feature>
<sequence>MGNPKSNQQPFVPQHIGTKPREAGGNKGKQMQDQSGQHPQVIQTKGE</sequence>
<evidence type="ECO:0000255" key="1">
    <source>
        <dbReference type="HAMAP-Rule" id="MF_01505"/>
    </source>
</evidence>
<evidence type="ECO:0000256" key="2">
    <source>
        <dbReference type="SAM" id="MobiDB-lite"/>
    </source>
</evidence>
<proteinExistence type="inferred from homology"/>
<name>SSPN_ANOFW</name>
<protein>
    <recommendedName>
        <fullName evidence="1">Small, acid-soluble spore protein N</fullName>
        <shortName evidence="1">SASP N</shortName>
    </recommendedName>
</protein>
<reference key="1">
    <citation type="journal article" date="2008" name="Genome Biol.">
        <title>Encapsulated in silica: genome, proteome and physiology of the thermophilic bacterium Anoxybacillus flavithermus WK1.</title>
        <authorList>
            <person name="Saw J.H."/>
            <person name="Mountain B.W."/>
            <person name="Feng L."/>
            <person name="Omelchenko M.V."/>
            <person name="Hou S."/>
            <person name="Saito J.A."/>
            <person name="Stott M.B."/>
            <person name="Li D."/>
            <person name="Zhao G."/>
            <person name="Wu J."/>
            <person name="Galperin M.Y."/>
            <person name="Koonin E.V."/>
            <person name="Makarova K.S."/>
            <person name="Wolf Y.I."/>
            <person name="Rigden D.J."/>
            <person name="Dunfield P.F."/>
            <person name="Wang L."/>
            <person name="Alam M."/>
        </authorList>
    </citation>
    <scope>NUCLEOTIDE SEQUENCE [LARGE SCALE GENOMIC DNA]</scope>
    <source>
        <strain>DSM 21510 / WK1</strain>
    </source>
</reference>
<comment type="subcellular location">
    <subcellularLocation>
        <location evidence="1">Spore core</location>
    </subcellularLocation>
</comment>
<comment type="induction">
    <text evidence="1">Expressed only in the forespore compartment of sporulating cells.</text>
</comment>
<comment type="similarity">
    <text evidence="1">Belongs to the SspN family.</text>
</comment>
<gene>
    <name evidence="1" type="primary">sspN</name>
    <name type="ordered locus">Aflv_1370</name>
</gene>
<accession>B7GKT2</accession>